<name>CALI_HUMAN</name>
<gene>
    <name type="primary">CCIN</name>
</gene>
<accession>Q13939</accession>
<accession>Q9BXG7</accession>
<proteinExistence type="evidence at protein level"/>
<dbReference type="EMBL" id="AF333334">
    <property type="protein sequence ID" value="AAK20829.1"/>
    <property type="molecule type" value="mRNA"/>
</dbReference>
<dbReference type="EMBL" id="Z46967">
    <property type="protein sequence ID" value="CAA87088.1"/>
    <property type="molecule type" value="mRNA"/>
</dbReference>
<dbReference type="CCDS" id="CCDS6599.1"/>
<dbReference type="PIR" id="I37216">
    <property type="entry name" value="I37216"/>
</dbReference>
<dbReference type="RefSeq" id="NP_005884.2">
    <property type="nucleotide sequence ID" value="NM_005893.3"/>
</dbReference>
<dbReference type="SMR" id="Q13939"/>
<dbReference type="BioGRID" id="107324">
    <property type="interactions" value="11"/>
</dbReference>
<dbReference type="FunCoup" id="Q13939">
    <property type="interactions" value="26"/>
</dbReference>
<dbReference type="IntAct" id="Q13939">
    <property type="interactions" value="10"/>
</dbReference>
<dbReference type="STRING" id="9606.ENSP00000334996"/>
<dbReference type="iPTMnet" id="Q13939"/>
<dbReference type="PhosphoSitePlus" id="Q13939"/>
<dbReference type="BioMuta" id="CCIN"/>
<dbReference type="DMDM" id="143811369"/>
<dbReference type="jPOST" id="Q13939"/>
<dbReference type="MassIVE" id="Q13939"/>
<dbReference type="PaxDb" id="9606-ENSP00000334996"/>
<dbReference type="PeptideAtlas" id="Q13939"/>
<dbReference type="ProteomicsDB" id="59761"/>
<dbReference type="Antibodypedia" id="11871">
    <property type="antibodies" value="131 antibodies from 20 providers"/>
</dbReference>
<dbReference type="DNASU" id="881"/>
<dbReference type="Ensembl" id="ENST00000335119.4">
    <property type="protein sequence ID" value="ENSP00000334996.2"/>
    <property type="gene ID" value="ENSG00000185972.6"/>
</dbReference>
<dbReference type="GeneID" id="881"/>
<dbReference type="KEGG" id="hsa:881"/>
<dbReference type="MANE-Select" id="ENST00000335119.4">
    <property type="protein sequence ID" value="ENSP00000334996.2"/>
    <property type="RefSeq nucleotide sequence ID" value="NM_005893.3"/>
    <property type="RefSeq protein sequence ID" value="NP_005884.2"/>
</dbReference>
<dbReference type="AGR" id="HGNC:1568"/>
<dbReference type="CTD" id="881"/>
<dbReference type="GeneCards" id="CCIN"/>
<dbReference type="HGNC" id="HGNC:1568">
    <property type="gene designation" value="CCIN"/>
</dbReference>
<dbReference type="HPA" id="ENSG00000185972">
    <property type="expression patterns" value="Tissue enriched (testis)"/>
</dbReference>
<dbReference type="MalaCards" id="CCIN"/>
<dbReference type="MIM" id="603960">
    <property type="type" value="gene"/>
</dbReference>
<dbReference type="MIM" id="620838">
    <property type="type" value="phenotype"/>
</dbReference>
<dbReference type="neXtProt" id="NX_Q13939"/>
<dbReference type="OpenTargets" id="ENSG00000185972"/>
<dbReference type="PharmGKB" id="PA26140"/>
<dbReference type="VEuPathDB" id="HostDB:ENSG00000185972"/>
<dbReference type="eggNOG" id="KOG4441">
    <property type="taxonomic scope" value="Eukaryota"/>
</dbReference>
<dbReference type="GeneTree" id="ENSGT00940000162268"/>
<dbReference type="HOGENOM" id="CLU_466589_0_0_1"/>
<dbReference type="InParanoid" id="Q13939"/>
<dbReference type="OMA" id="MPYKAAA"/>
<dbReference type="OrthoDB" id="9978265at2759"/>
<dbReference type="PAN-GO" id="Q13939">
    <property type="GO annotations" value="5 GO annotations based on evolutionary models"/>
</dbReference>
<dbReference type="PhylomeDB" id="Q13939"/>
<dbReference type="TreeFam" id="TF331981"/>
<dbReference type="PathwayCommons" id="Q13939"/>
<dbReference type="SignaLink" id="Q13939"/>
<dbReference type="SIGNOR" id="Q13939"/>
<dbReference type="BioGRID-ORCS" id="881">
    <property type="hits" value="23 hits in 1181 CRISPR screens"/>
</dbReference>
<dbReference type="ChiTaRS" id="CCIN">
    <property type="organism name" value="human"/>
</dbReference>
<dbReference type="GenomeRNAi" id="881"/>
<dbReference type="Pharos" id="Q13939">
    <property type="development level" value="Tbio"/>
</dbReference>
<dbReference type="PRO" id="PR:Q13939"/>
<dbReference type="Proteomes" id="UP000005640">
    <property type="component" value="Chromosome 9"/>
</dbReference>
<dbReference type="RNAct" id="Q13939">
    <property type="molecule type" value="protein"/>
</dbReference>
<dbReference type="Bgee" id="ENSG00000185972">
    <property type="expression patterns" value="Expressed in left testis and 92 other cell types or tissues"/>
</dbReference>
<dbReference type="ExpressionAtlas" id="Q13939">
    <property type="expression patterns" value="baseline and differential"/>
</dbReference>
<dbReference type="GO" id="GO:0031463">
    <property type="term" value="C:Cul3-RING ubiquitin ligase complex"/>
    <property type="evidence" value="ECO:0000318"/>
    <property type="project" value="GO_Central"/>
</dbReference>
<dbReference type="GO" id="GO:0005737">
    <property type="term" value="C:cytoplasm"/>
    <property type="evidence" value="ECO:0000318"/>
    <property type="project" value="GO_Central"/>
</dbReference>
<dbReference type="GO" id="GO:0033150">
    <property type="term" value="C:cytoskeletal calyx"/>
    <property type="evidence" value="ECO:0000314"/>
    <property type="project" value="UniProtKB"/>
</dbReference>
<dbReference type="GO" id="GO:0005634">
    <property type="term" value="C:nucleus"/>
    <property type="evidence" value="ECO:0007005"/>
    <property type="project" value="UniProtKB"/>
</dbReference>
<dbReference type="GO" id="GO:1990756">
    <property type="term" value="F:ubiquitin-like ligase-substrate adaptor activity"/>
    <property type="evidence" value="ECO:0000318"/>
    <property type="project" value="GO_Central"/>
</dbReference>
<dbReference type="GO" id="GO:0030154">
    <property type="term" value="P:cell differentiation"/>
    <property type="evidence" value="ECO:0007669"/>
    <property type="project" value="UniProtKB-KW"/>
</dbReference>
<dbReference type="GO" id="GO:0043161">
    <property type="term" value="P:proteasome-mediated ubiquitin-dependent protein catabolic process"/>
    <property type="evidence" value="ECO:0000318"/>
    <property type="project" value="GO_Central"/>
</dbReference>
<dbReference type="GO" id="GO:0007283">
    <property type="term" value="P:spermatogenesis"/>
    <property type="evidence" value="ECO:0000315"/>
    <property type="project" value="UniProtKB"/>
</dbReference>
<dbReference type="CDD" id="cd18503">
    <property type="entry name" value="BACK_calicin"/>
    <property type="match status" value="1"/>
</dbReference>
<dbReference type="CDD" id="cd18307">
    <property type="entry name" value="BTB_POZ_calicin"/>
    <property type="match status" value="1"/>
</dbReference>
<dbReference type="FunFam" id="1.25.40.420:FF:000022">
    <property type="entry name" value="Calicin"/>
    <property type="match status" value="1"/>
</dbReference>
<dbReference type="FunFam" id="2.120.10.80:FF:000126">
    <property type="entry name" value="Calicin"/>
    <property type="match status" value="1"/>
</dbReference>
<dbReference type="FunFam" id="2.120.10.80:FF:000138">
    <property type="entry name" value="Calicin"/>
    <property type="match status" value="1"/>
</dbReference>
<dbReference type="Gene3D" id="1.25.40.420">
    <property type="match status" value="1"/>
</dbReference>
<dbReference type="Gene3D" id="2.120.10.80">
    <property type="entry name" value="Kelch-type beta propeller"/>
    <property type="match status" value="2"/>
</dbReference>
<dbReference type="Gene3D" id="3.30.710.10">
    <property type="entry name" value="Potassium Channel Kv1.1, Chain A"/>
    <property type="match status" value="1"/>
</dbReference>
<dbReference type="InterPro" id="IPR011705">
    <property type="entry name" value="BACK"/>
</dbReference>
<dbReference type="InterPro" id="IPR017096">
    <property type="entry name" value="BTB-kelch_protein"/>
</dbReference>
<dbReference type="InterPro" id="IPR000210">
    <property type="entry name" value="BTB/POZ_dom"/>
</dbReference>
<dbReference type="InterPro" id="IPR048070">
    <property type="entry name" value="Calicin_BTB_POZ"/>
</dbReference>
<dbReference type="InterPro" id="IPR015915">
    <property type="entry name" value="Kelch-typ_b-propeller"/>
</dbReference>
<dbReference type="InterPro" id="IPR006652">
    <property type="entry name" value="Kelch_1"/>
</dbReference>
<dbReference type="InterPro" id="IPR011333">
    <property type="entry name" value="SKP1/BTB/POZ_sf"/>
</dbReference>
<dbReference type="PANTHER" id="PTHR45632:SF3">
    <property type="entry name" value="KELCH-LIKE PROTEIN 32"/>
    <property type="match status" value="1"/>
</dbReference>
<dbReference type="PANTHER" id="PTHR45632">
    <property type="entry name" value="LD33804P"/>
    <property type="match status" value="1"/>
</dbReference>
<dbReference type="Pfam" id="PF07707">
    <property type="entry name" value="BACK"/>
    <property type="match status" value="1"/>
</dbReference>
<dbReference type="Pfam" id="PF00651">
    <property type="entry name" value="BTB"/>
    <property type="match status" value="1"/>
</dbReference>
<dbReference type="Pfam" id="PF01344">
    <property type="entry name" value="Kelch_1"/>
    <property type="match status" value="1"/>
</dbReference>
<dbReference type="Pfam" id="PF13964">
    <property type="entry name" value="Kelch_6"/>
    <property type="match status" value="1"/>
</dbReference>
<dbReference type="PIRSF" id="PIRSF037037">
    <property type="entry name" value="Kelch-like_protein_gigaxonin"/>
    <property type="match status" value="1"/>
</dbReference>
<dbReference type="SMART" id="SM00875">
    <property type="entry name" value="BACK"/>
    <property type="match status" value="1"/>
</dbReference>
<dbReference type="SMART" id="SM00225">
    <property type="entry name" value="BTB"/>
    <property type="match status" value="1"/>
</dbReference>
<dbReference type="SMART" id="SM00612">
    <property type="entry name" value="Kelch"/>
    <property type="match status" value="3"/>
</dbReference>
<dbReference type="SUPFAM" id="SSF117281">
    <property type="entry name" value="Kelch motif"/>
    <property type="match status" value="1"/>
</dbReference>
<dbReference type="SUPFAM" id="SSF54695">
    <property type="entry name" value="POZ domain"/>
    <property type="match status" value="1"/>
</dbReference>
<dbReference type="PROSITE" id="PS50097">
    <property type="entry name" value="BTB"/>
    <property type="match status" value="1"/>
</dbReference>
<organism>
    <name type="scientific">Homo sapiens</name>
    <name type="common">Human</name>
    <dbReference type="NCBI Taxonomy" id="9606"/>
    <lineage>
        <taxon>Eukaryota</taxon>
        <taxon>Metazoa</taxon>
        <taxon>Chordata</taxon>
        <taxon>Craniata</taxon>
        <taxon>Vertebrata</taxon>
        <taxon>Euteleostomi</taxon>
        <taxon>Mammalia</taxon>
        <taxon>Eutheria</taxon>
        <taxon>Euarchontoglires</taxon>
        <taxon>Primates</taxon>
        <taxon>Haplorrhini</taxon>
        <taxon>Catarrhini</taxon>
        <taxon>Hominidae</taxon>
        <taxon>Homo</taxon>
    </lineage>
</organism>
<sequence length="588" mass="66582">MKLEFTEKNYNSFVLQNLNRQRKRKEYWDMALSVDNHVFFAHRNVLAAVSPLVRSLISSNDMKTADELFITIDTSYLSPVTVDQLLDYFYSGKVVISEQNVEELLRGAQYFNTPRLRVHCNDFLIKSICRANCLRYLFLAELFELKEVSDVAYSGIRDNFHYWASPEGSMHFMRCPPVIFGRLLRDENLHVLNEDQALSALINWVYFRKEDREKYFKKFFNYINLNAVSNKTLVFASNKLVGMENTSSHTTLIESVLMDRKQERPCSLLVYQRKGALLDSVVILGGQKAHGQFNDGVFAYIIQENLWMKLSDMPYRAAALSATSAGRYIYISGGTTEQISGLKTAWRYDMDDNSWTKLPDLPIGLVFHTMVTCGGTVYSVGGSIAPRRYVSNIYRYDERKEVWCLAGKMSIPMDGTAVITKGDRHLYIVTGRCLVKGYISRVGVVDCFDTSTGDVVQCITFPIEFNHRPLLSFQQDNILCVHSHRQSVEINLQKVKASKTTTSVPVLPNSCPLDVSHAICSIGDSKVFVCGGVTTASDVQTKDYTINPNAFLLDQKTGKWKTLAPPPEALDCPACCLAKLPCKILQRI</sequence>
<comment type="function">
    <text evidence="5">Required for both nuclear and acrosomal shaping during spermiogenesis.</text>
</comment>
<comment type="subunit">
    <text evidence="6">Interacts with CYLC1; the interaction may be relevant for proper acrosome attachment to the nuclear envelope.</text>
</comment>
<comment type="interaction">
    <interactant intactId="EBI-25879469">
        <id>Q13939</id>
    </interactant>
    <interactant intactId="EBI-466029">
        <id>P42858</id>
        <label>HTT</label>
    </interactant>
    <organismsDiffer>false</organismsDiffer>
    <experiments>3</experiments>
</comment>
<comment type="interaction">
    <interactant intactId="EBI-25879469">
        <id>Q13939</id>
    </interactant>
    <interactant intactId="EBI-21251460">
        <id>O60260-5</id>
        <label>PRKN</label>
    </interactant>
    <organismsDiffer>false</organismsDiffer>
    <experiments>3</experiments>
</comment>
<comment type="interaction">
    <interactant intactId="EBI-25879469">
        <id>Q13939</id>
    </interactant>
    <interactant intactId="EBI-372899">
        <id>Q13148</id>
        <label>TARDBP</label>
    </interactant>
    <organismsDiffer>false</organismsDiffer>
    <experiments>3</experiments>
</comment>
<comment type="interaction">
    <interactant intactId="EBI-25879469">
        <id>Q13939</id>
    </interactant>
    <interactant intactId="EBI-12157263">
        <id>P40337-2</id>
        <label>VHL</label>
    </interactant>
    <organismsDiffer>false</organismsDiffer>
    <experiments>3</experiments>
</comment>
<comment type="subcellular location">
    <subcellularLocation>
        <location evidence="4 5">Cytoplasm</location>
        <location evidence="4 5">Cytoskeleton</location>
        <location evidence="4 5">Perinuclear theca</location>
        <location evidence="4 5">Calyx</location>
    </subcellularLocation>
</comment>
<comment type="tissue specificity">
    <text evidence="4 5">Expressed in testis, in spermatozoa (at protein level).</text>
</comment>
<comment type="disease" evidence="3 4 5">
    <disease id="DI-06898">
        <name>Spermatogenic failure 91</name>
        <acronym>SPGF91</acronym>
        <description>An autosomal recessive, male infertility disorder due to globozoospermia and asthenoteratozoospermia. Patient sperm show defects of the head, including a misshapen rounded head and detachment of the acrosome, and the sperm fail to attach to the zona pellucida of the egg.</description>
        <dbReference type="MIM" id="620838"/>
    </disease>
    <text>The disease is caused by variants affecting the gene represented in this entry.</text>
</comment>
<feature type="chain" id="PRO_0000119067" description="Calicin">
    <location>
        <begin position="1"/>
        <end position="588"/>
    </location>
</feature>
<feature type="domain" description="BTB" evidence="2">
    <location>
        <begin position="12"/>
        <end position="124"/>
    </location>
</feature>
<feature type="domain" description="BACK">
    <location>
        <begin position="133"/>
        <end position="235"/>
    </location>
</feature>
<feature type="repeat" description="Kelch 1">
    <location>
        <begin position="280"/>
        <end position="327"/>
    </location>
</feature>
<feature type="repeat" description="Kelch 2">
    <location>
        <begin position="328"/>
        <end position="375"/>
    </location>
</feature>
<feature type="repeat" description="Kelch 3">
    <location>
        <begin position="377"/>
        <end position="423"/>
    </location>
</feature>
<feature type="repeat" description="Kelch 4">
    <location>
        <begin position="425"/>
        <end position="475"/>
    </location>
</feature>
<feature type="repeat" description="Kelch 5">
    <location>
        <begin position="476"/>
        <end position="525"/>
    </location>
</feature>
<feature type="repeat" description="Kelch 6">
    <location>
        <begin position="526"/>
        <end position="580"/>
    </location>
</feature>
<feature type="modified residue" description="Phosphoserine" evidence="1">
    <location>
        <position position="149"/>
    </location>
</feature>
<feature type="sequence variant" id="VAR_089585" description="In SPGF91; pathogenic; in spermatozoa, undetectable in the postacrosomal region, suggesting that it could be degraded or shed during spermiogenesis; when tested in knockin mice, animals develop normally, however, males are infertile and their spermatozoa show a substantial decrease in motility; spermatozoa from homozygous male mice exhibit several abnormalities, including abnormal head shaping, with an increase in their length and width, apical defect of the acrosome and nuclear lacunae devoid of chromatin; at the flagellum, mutant spermatozoa display mitochondrial sheath misassembly and coiling tail around the nucleus; dbSNP:rs746986151." evidence="5">
    <original>H</original>
    <variation>L</variation>
    <location>
        <position position="42"/>
    </location>
</feature>
<feature type="sequence variant" id="VAR_050039" description="In dbSNP:rs34789048.">
    <original>S</original>
    <variation>N</variation>
    <location>
        <position position="75"/>
    </location>
</feature>
<feature type="sequence variant" id="VAR_089586" description="In SPGF91; uncertain significance; strongly reduced expression at the calyx of the sperm head; dbSNP:rs1228645269." evidence="4">
    <original>L</original>
    <variation>P</variation>
    <location>
        <position position="77"/>
    </location>
</feature>
<feature type="sequence variant" id="VAR_089587" description="In SPGF91; uncertain significance; dbSNP:rs750854950." evidence="3">
    <original>G</original>
    <variation>S</variation>
    <location>
        <position position="285"/>
    </location>
</feature>
<feature type="sequence variant" id="VAR_089588" description="In SPGF91; pathogenic; in spermatozoa, undetectable in the postacrosomal region, suggesting that it could be degraded or shed during spermiogenesis; when tested in knockin mice, which also carry variant 447-C--I-588 del, a setting similar to that of the original patient with this phenotype, animals develop normally, however, males are infertile and their spermatozoa show a substantial decrease in motility; spermatozoa from homozygous male mice exhibit several abnormalities, including abnormal head shaping, with an increase in their length and width, apical defect of the acrosome and nuclear lacunae devoid of chromatin; at the flagellum, mutant spermatozoa display mitochondrial sheath misassembly and coiling tail around the nucleus; dbSNP:rs762753747." evidence="5">
    <original>R</original>
    <variation>W</variation>
    <location>
        <position position="432"/>
    </location>
</feature>
<feature type="sequence variant" id="VAR_089589" description="In SPGF91; pathogenic; in spermatozoa, undetectable in the postacrosomal region, suggesting that it could be degraded or shed during spermiogenesis; when tested in knockin mice, which also carry variant W-432, a setting similar to that of the original patient with this phenotype, animals develop normally, however, males are infertile and their spermatozoa show a substantial decrease in motility; spermatozoa from homozygous male mice exhibit several abnormalities, including abnormal head shaping, with an increase in their length and width, apical defect of the acrosome and nuclear lacunae devoid of chromatin; at the flagellum, mutant spermatozoa display mitochondrial sheath misassembly and coiling tail around the nucleus." evidence="5">
    <location>
        <begin position="447"/>
        <end position="588"/>
    </location>
</feature>
<feature type="sequence conflict" description="In Ref. 1; AAK20829." evidence="7" ref="1">
    <original>N</original>
    <variation>S</variation>
    <location>
        <position position="226"/>
    </location>
</feature>
<feature type="sequence conflict" description="In Ref. 2; CAA87088." evidence="7" ref="2">
    <original>C</original>
    <variation>W</variation>
    <location>
        <position position="433"/>
    </location>
</feature>
<feature type="sequence conflict" description="In Ref. 1; AAK20829." evidence="7" ref="1">
    <original>I</original>
    <variation>N</variation>
    <location>
        <position position="490"/>
    </location>
</feature>
<protein>
    <recommendedName>
        <fullName>Calicin</fullName>
    </recommendedName>
</protein>
<reference key="1">
    <citation type="submission" date="2001-01" db="EMBL/GenBank/DDBJ databases">
        <authorList>
            <person name="Sha J.H."/>
            <person name="Zhou Z.M."/>
            <person name="Li J.M."/>
        </authorList>
    </citation>
    <scope>NUCLEOTIDE SEQUENCE [MRNA]</scope>
    <source>
        <tissue>Testis</tissue>
    </source>
</reference>
<reference key="2">
    <citation type="journal article" date="1995" name="Exp. Cell Res.">
        <title>Molecular nature of calicin, a major basic protein of the mammalian sperm head cytoskeleton.</title>
        <authorList>
            <person name="von Buelow M."/>
            <person name="Heid H.W."/>
            <person name="Hess H."/>
            <person name="Franke W.W."/>
        </authorList>
    </citation>
    <scope>NUCLEOTIDE SEQUENCE [MRNA] OF 4-588</scope>
    <source>
        <tissue>Sperm</tissue>
    </source>
</reference>
<reference key="3">
    <citation type="journal article" date="2020" name="Hum. Reprod.">
        <title>Exome sequencing reveals novel causes as well as new candidate genes for human globozoospermia.</title>
        <authorList>
            <person name="Oud M.S."/>
            <person name="Okutman O."/>
            <person name="Hendricks L.A.J."/>
            <person name="de Vries P.F."/>
            <person name="Houston B.J."/>
            <person name="Vissers L.E.L.M."/>
            <person name="O'Bryan M.K."/>
            <person name="Ramos L."/>
            <person name="Chemes H.E."/>
            <person name="Viville S."/>
            <person name="Veltman J.A."/>
        </authorList>
    </citation>
    <scope>INVOLVEMENT IN SPGF91</scope>
    <scope>VARIANT SPGF91 SER-285</scope>
</reference>
<reference key="4">
    <citation type="journal article" date="2022" name="Sci. Bull.">
        <title>Mutations in CCIN cause teratozoospermia and male infertility.</title>
        <authorList>
            <person name="Fan Y."/>
            <person name="Huang C."/>
            <person name="Chen J."/>
            <person name="Chen Y."/>
            <person name="Wang Y."/>
            <person name="Yan Z."/>
            <person name="Yu W."/>
            <person name="Wu H."/>
            <person name="Yang Y."/>
            <person name="Nie L."/>
            <person name="Huang S."/>
            <person name="Wang F."/>
            <person name="Wang H."/>
            <person name="Hua Y."/>
            <person name="Lyu Q."/>
            <person name="Kuang Y."/>
            <person name="Lei M."/>
        </authorList>
    </citation>
    <scope>INVOLVEMENT IN SPGF91</scope>
    <scope>VARIANTS SPGF91 LEU-42; TRP-432 AND 447-CYS--ILE-588 DEL</scope>
    <scope>CHARACTERIZATION OF VARIANTS SPGF91 LEU-42; TRP-432 AND 447-CYS--ILE-588 DEL</scope>
    <scope>FUNCTION</scope>
    <scope>TISSUE SPECIFICITY</scope>
    <scope>SUBCELLULAR LOCATION</scope>
</reference>
<reference key="5">
    <citation type="journal article" date="2024" name="Elife">
        <title>Disruption in CYLC1 leads to acrosome detachment, sperm head deformity, and male in/subfertility in humans and mice.</title>
        <authorList>
            <person name="Jin H.J."/>
            <person name="Fan Y."/>
            <person name="Yang X."/>
            <person name="Dong Y."/>
            <person name="Zhang X.Z."/>
            <person name="Geng X.Y."/>
            <person name="Yan Z."/>
            <person name="Wu L."/>
            <person name="Ma M."/>
            <person name="Li B."/>
            <person name="Lyu Q."/>
            <person name="Pan Y."/>
            <person name="Liu M."/>
            <person name="Kuang Y."/>
            <person name="Chen S.R."/>
        </authorList>
    </citation>
    <scope>INTERACTION WITH CYLC1</scope>
</reference>
<reference key="6">
    <citation type="journal article" date="2023" name="Clin. Genet.">
        <title>Novel homozygous variant of CCIN causes male infertility owing to the abnormal sperm head with a nuclear subsidence phenotype.</title>
        <authorList>
            <person name="He J."/>
            <person name="Liu Q."/>
            <person name="Wang W."/>
            <person name="Su L."/>
            <person name="Meng L."/>
            <person name="Tan C."/>
            <person name="Zhang H."/>
            <person name="Zhang Q."/>
            <person name="Lu G."/>
            <person name="Du J."/>
            <person name="Lin G."/>
            <person name="Tu C."/>
            <person name="Tan Y.Q."/>
        </authorList>
    </citation>
    <scope>INVOLVEMENT IN SPGF91</scope>
    <scope>VARIANT SPGF91 PRO-77</scope>
    <scope>CHARACTERIZATION OF VARIANT SPGF91 PRO-77</scope>
    <scope>SUBCELLULAR LOCATION</scope>
    <scope>TISSUE SPECIFICITY</scope>
</reference>
<evidence type="ECO:0000250" key="1">
    <source>
        <dbReference type="UniProtKB" id="Q5XI58"/>
    </source>
</evidence>
<evidence type="ECO:0000255" key="2">
    <source>
        <dbReference type="PROSITE-ProRule" id="PRU00037"/>
    </source>
</evidence>
<evidence type="ECO:0000269" key="3">
    <source>
    </source>
</evidence>
<evidence type="ECO:0000269" key="4">
    <source>
    </source>
</evidence>
<evidence type="ECO:0000269" key="5">
    <source>
    </source>
</evidence>
<evidence type="ECO:0000269" key="6">
    <source>
    </source>
</evidence>
<evidence type="ECO:0000305" key="7"/>
<keyword id="KW-0963">Cytoplasm</keyword>
<keyword id="KW-0206">Cytoskeleton</keyword>
<keyword id="KW-0217">Developmental protein</keyword>
<keyword id="KW-0221">Differentiation</keyword>
<keyword id="KW-0225">Disease variant</keyword>
<keyword id="KW-0880">Kelch repeat</keyword>
<keyword id="KW-0597">Phosphoprotein</keyword>
<keyword id="KW-1267">Proteomics identification</keyword>
<keyword id="KW-1185">Reference proteome</keyword>
<keyword id="KW-0677">Repeat</keyword>
<keyword id="KW-0744">Spermatogenesis</keyword>